<proteinExistence type="inferred from homology"/>
<feature type="chain" id="PRO_1000143903" description="Small ribosomal subunit protein uS14">
    <location>
        <begin position="1"/>
        <end position="61"/>
    </location>
</feature>
<feature type="binding site" evidence="1">
    <location>
        <position position="24"/>
    </location>
    <ligand>
        <name>Zn(2+)</name>
        <dbReference type="ChEBI" id="CHEBI:29105"/>
    </ligand>
</feature>
<feature type="binding site" evidence="1">
    <location>
        <position position="27"/>
    </location>
    <ligand>
        <name>Zn(2+)</name>
        <dbReference type="ChEBI" id="CHEBI:29105"/>
    </ligand>
</feature>
<feature type="binding site" evidence="1">
    <location>
        <position position="40"/>
    </location>
    <ligand>
        <name>Zn(2+)</name>
        <dbReference type="ChEBI" id="CHEBI:29105"/>
    </ligand>
</feature>
<feature type="binding site" evidence="1">
    <location>
        <position position="43"/>
    </location>
    <ligand>
        <name>Zn(2+)</name>
        <dbReference type="ChEBI" id="CHEBI:29105"/>
    </ligand>
</feature>
<protein>
    <recommendedName>
        <fullName evidence="1">Small ribosomal subunit protein uS14</fullName>
    </recommendedName>
    <alternativeName>
        <fullName evidence="2">30S ribosomal protein S14 type Z</fullName>
    </alternativeName>
</protein>
<reference key="1">
    <citation type="journal article" date="2007" name="Genome Res.">
        <title>Genome characteristics of facultatively symbiotic Frankia sp. strains reflect host range and host plant biogeography.</title>
        <authorList>
            <person name="Normand P."/>
            <person name="Lapierre P."/>
            <person name="Tisa L.S."/>
            <person name="Gogarten J.P."/>
            <person name="Alloisio N."/>
            <person name="Bagnarol E."/>
            <person name="Bassi C.A."/>
            <person name="Berry A.M."/>
            <person name="Bickhart D.M."/>
            <person name="Choisne N."/>
            <person name="Couloux A."/>
            <person name="Cournoyer B."/>
            <person name="Cruveiller S."/>
            <person name="Daubin V."/>
            <person name="Demange N."/>
            <person name="Francino M.P."/>
            <person name="Goltsman E."/>
            <person name="Huang Y."/>
            <person name="Kopp O.R."/>
            <person name="Labarre L."/>
            <person name="Lapidus A."/>
            <person name="Lavire C."/>
            <person name="Marechal J."/>
            <person name="Martinez M."/>
            <person name="Mastronunzio J.E."/>
            <person name="Mullin B.C."/>
            <person name="Niemann J."/>
            <person name="Pujic P."/>
            <person name="Rawnsley T."/>
            <person name="Rouy Z."/>
            <person name="Schenowitz C."/>
            <person name="Sellstedt A."/>
            <person name="Tavares F."/>
            <person name="Tomkins J.P."/>
            <person name="Vallenet D."/>
            <person name="Valverde C."/>
            <person name="Wall L.G."/>
            <person name="Wang Y."/>
            <person name="Medigue C."/>
            <person name="Benson D.R."/>
        </authorList>
    </citation>
    <scope>NUCLEOTIDE SEQUENCE [LARGE SCALE GENOMIC DNA]</scope>
    <source>
        <strain>EAN1pec</strain>
    </source>
</reference>
<evidence type="ECO:0000255" key="1">
    <source>
        <dbReference type="HAMAP-Rule" id="MF_01364"/>
    </source>
</evidence>
<evidence type="ECO:0000305" key="2"/>
<sequence length="61" mass="7012">MAKKALVEKAARKPKYAVRGYTRCQRCGRPRSVYRVFGLCRVCLRQMAHRGELPGVTKSSW</sequence>
<accession>A8LC43</accession>
<gene>
    <name evidence="1" type="primary">rpsZ</name>
    <name evidence="1" type="synonym">rpsN</name>
    <name type="ordered locus">Franean1_6036</name>
</gene>
<name>RS14Z_PARS2</name>
<organism>
    <name type="scientific">Parafrankia sp. (strain EAN1pec)</name>
    <dbReference type="NCBI Taxonomy" id="298653"/>
    <lineage>
        <taxon>Bacteria</taxon>
        <taxon>Bacillati</taxon>
        <taxon>Actinomycetota</taxon>
        <taxon>Actinomycetes</taxon>
        <taxon>Frankiales</taxon>
        <taxon>Frankiaceae</taxon>
        <taxon>Parafrankia</taxon>
    </lineage>
</organism>
<keyword id="KW-0479">Metal-binding</keyword>
<keyword id="KW-0687">Ribonucleoprotein</keyword>
<keyword id="KW-0689">Ribosomal protein</keyword>
<keyword id="KW-0694">RNA-binding</keyword>
<keyword id="KW-0699">rRNA-binding</keyword>
<keyword id="KW-0862">Zinc</keyword>
<comment type="function">
    <text evidence="1">Binds 16S rRNA, required for the assembly of 30S particles and may also be responsible for determining the conformation of the 16S rRNA at the A site.</text>
</comment>
<comment type="cofactor">
    <cofactor evidence="1">
        <name>Zn(2+)</name>
        <dbReference type="ChEBI" id="CHEBI:29105"/>
    </cofactor>
    <text evidence="1">Binds 1 zinc ion per subunit.</text>
</comment>
<comment type="subunit">
    <text evidence="1">Part of the 30S ribosomal subunit. Contacts proteins S3 and S10.</text>
</comment>
<comment type="similarity">
    <text evidence="1">Belongs to the universal ribosomal protein uS14 family. Zinc-binding uS14 subfamily.</text>
</comment>
<dbReference type="EMBL" id="CP000820">
    <property type="protein sequence ID" value="ABW15380.1"/>
    <property type="molecule type" value="Genomic_DNA"/>
</dbReference>
<dbReference type="RefSeq" id="WP_006539145.1">
    <property type="nucleotide sequence ID" value="NC_009921.1"/>
</dbReference>
<dbReference type="SMR" id="A8LC43"/>
<dbReference type="STRING" id="298653.Franean1_6036"/>
<dbReference type="KEGG" id="fre:Franean1_6036"/>
<dbReference type="eggNOG" id="COG0199">
    <property type="taxonomic scope" value="Bacteria"/>
</dbReference>
<dbReference type="HOGENOM" id="CLU_139869_3_0_11"/>
<dbReference type="GO" id="GO:0005737">
    <property type="term" value="C:cytoplasm"/>
    <property type="evidence" value="ECO:0007669"/>
    <property type="project" value="UniProtKB-ARBA"/>
</dbReference>
<dbReference type="GO" id="GO:0015935">
    <property type="term" value="C:small ribosomal subunit"/>
    <property type="evidence" value="ECO:0007669"/>
    <property type="project" value="TreeGrafter"/>
</dbReference>
<dbReference type="GO" id="GO:0019843">
    <property type="term" value="F:rRNA binding"/>
    <property type="evidence" value="ECO:0007669"/>
    <property type="project" value="UniProtKB-UniRule"/>
</dbReference>
<dbReference type="GO" id="GO:0003735">
    <property type="term" value="F:structural constituent of ribosome"/>
    <property type="evidence" value="ECO:0007669"/>
    <property type="project" value="InterPro"/>
</dbReference>
<dbReference type="GO" id="GO:0008270">
    <property type="term" value="F:zinc ion binding"/>
    <property type="evidence" value="ECO:0007669"/>
    <property type="project" value="UniProtKB-UniRule"/>
</dbReference>
<dbReference type="GO" id="GO:0006412">
    <property type="term" value="P:translation"/>
    <property type="evidence" value="ECO:0007669"/>
    <property type="project" value="UniProtKB-UniRule"/>
</dbReference>
<dbReference type="FunFam" id="4.10.830.10:FF:000001">
    <property type="entry name" value="30S ribosomal protein S14 type Z"/>
    <property type="match status" value="1"/>
</dbReference>
<dbReference type="Gene3D" id="4.10.830.10">
    <property type="entry name" value="30s Ribosomal Protein S14, Chain N"/>
    <property type="match status" value="1"/>
</dbReference>
<dbReference type="HAMAP" id="MF_01364_B">
    <property type="entry name" value="Ribosomal_uS14_2_B"/>
    <property type="match status" value="1"/>
</dbReference>
<dbReference type="InterPro" id="IPR001209">
    <property type="entry name" value="Ribosomal_uS14"/>
</dbReference>
<dbReference type="InterPro" id="IPR023053">
    <property type="entry name" value="Ribosomal_uS14_bact"/>
</dbReference>
<dbReference type="InterPro" id="IPR018271">
    <property type="entry name" value="Ribosomal_uS14_CS"/>
</dbReference>
<dbReference type="InterPro" id="IPR043140">
    <property type="entry name" value="Ribosomal_uS14_sf"/>
</dbReference>
<dbReference type="NCBIfam" id="NF005974">
    <property type="entry name" value="PRK08061.1"/>
    <property type="match status" value="1"/>
</dbReference>
<dbReference type="PANTHER" id="PTHR19836">
    <property type="entry name" value="30S RIBOSOMAL PROTEIN S14"/>
    <property type="match status" value="1"/>
</dbReference>
<dbReference type="PANTHER" id="PTHR19836:SF19">
    <property type="entry name" value="SMALL RIBOSOMAL SUBUNIT PROTEIN US14M"/>
    <property type="match status" value="1"/>
</dbReference>
<dbReference type="Pfam" id="PF00253">
    <property type="entry name" value="Ribosomal_S14"/>
    <property type="match status" value="1"/>
</dbReference>
<dbReference type="SUPFAM" id="SSF57716">
    <property type="entry name" value="Glucocorticoid receptor-like (DNA-binding domain)"/>
    <property type="match status" value="1"/>
</dbReference>
<dbReference type="PROSITE" id="PS00527">
    <property type="entry name" value="RIBOSOMAL_S14"/>
    <property type="match status" value="1"/>
</dbReference>